<proteinExistence type="inferred from homology"/>
<name>RNFD_PSEAB</name>
<gene>
    <name evidence="1" type="primary">rnfD</name>
    <name type="ordered locus">PA14_18910</name>
</gene>
<keyword id="KW-0997">Cell inner membrane</keyword>
<keyword id="KW-1003">Cell membrane</keyword>
<keyword id="KW-0249">Electron transport</keyword>
<keyword id="KW-0285">Flavoprotein</keyword>
<keyword id="KW-0288">FMN</keyword>
<keyword id="KW-0472">Membrane</keyword>
<keyword id="KW-0597">Phosphoprotein</keyword>
<keyword id="KW-1278">Translocase</keyword>
<keyword id="KW-0812">Transmembrane</keyword>
<keyword id="KW-1133">Transmembrane helix</keyword>
<keyword id="KW-0813">Transport</keyword>
<comment type="function">
    <text evidence="1">Part of a membrane-bound complex that couples electron transfer with translocation of ions across the membrane.</text>
</comment>
<comment type="cofactor">
    <cofactor evidence="1">
        <name>FMN</name>
        <dbReference type="ChEBI" id="CHEBI:58210"/>
    </cofactor>
</comment>
<comment type="subunit">
    <text evidence="1">The complex is composed of six subunits: RnfA, RnfB, RnfC, RnfD, RnfE and RnfG.</text>
</comment>
<comment type="subcellular location">
    <subcellularLocation>
        <location evidence="1">Cell inner membrane</location>
        <topology evidence="1">Multi-pass membrane protein</topology>
    </subcellularLocation>
</comment>
<comment type="similarity">
    <text evidence="1">Belongs to the NqrB/RnfD family.</text>
</comment>
<organism>
    <name type="scientific">Pseudomonas aeruginosa (strain UCBPP-PA14)</name>
    <dbReference type="NCBI Taxonomy" id="208963"/>
    <lineage>
        <taxon>Bacteria</taxon>
        <taxon>Pseudomonadati</taxon>
        <taxon>Pseudomonadota</taxon>
        <taxon>Gammaproteobacteria</taxon>
        <taxon>Pseudomonadales</taxon>
        <taxon>Pseudomonadaceae</taxon>
        <taxon>Pseudomonas</taxon>
    </lineage>
</organism>
<feature type="chain" id="PRO_0000298234" description="Ion-translocating oxidoreductase complex subunit D">
    <location>
        <begin position="1"/>
        <end position="344"/>
    </location>
</feature>
<feature type="transmembrane region" description="Helical" evidence="1">
    <location>
        <begin position="23"/>
        <end position="43"/>
    </location>
</feature>
<feature type="transmembrane region" description="Helical" evidence="1">
    <location>
        <begin position="44"/>
        <end position="64"/>
    </location>
</feature>
<feature type="transmembrane region" description="Helical" evidence="1">
    <location>
        <begin position="77"/>
        <end position="99"/>
    </location>
</feature>
<feature type="transmembrane region" description="Helical" evidence="1">
    <location>
        <begin position="120"/>
        <end position="140"/>
    </location>
</feature>
<feature type="transmembrane region" description="Helical" evidence="1">
    <location>
        <begin position="198"/>
        <end position="218"/>
    </location>
</feature>
<feature type="transmembrane region" description="Helical" evidence="1">
    <location>
        <begin position="222"/>
        <end position="242"/>
    </location>
</feature>
<feature type="transmembrane region" description="Helical" evidence="1">
    <location>
        <begin position="252"/>
        <end position="272"/>
    </location>
</feature>
<feature type="transmembrane region" description="Helical" evidence="1">
    <location>
        <begin position="285"/>
        <end position="305"/>
    </location>
</feature>
<feature type="transmembrane region" description="Helical" evidence="1">
    <location>
        <begin position="306"/>
        <end position="326"/>
    </location>
</feature>
<feature type="modified residue" description="FMN phosphoryl threonine" evidence="1">
    <location>
        <position position="172"/>
    </location>
</feature>
<dbReference type="EC" id="7.-.-.-" evidence="1"/>
<dbReference type="EMBL" id="CP000438">
    <property type="protein sequence ID" value="ABJ12745.1"/>
    <property type="molecule type" value="Genomic_DNA"/>
</dbReference>
<dbReference type="RefSeq" id="WP_003092045.1">
    <property type="nucleotide sequence ID" value="NZ_CP034244.1"/>
</dbReference>
<dbReference type="SMR" id="Q02QY1"/>
<dbReference type="KEGG" id="pau:PA14_18910"/>
<dbReference type="PseudoCAP" id="PA14_18910"/>
<dbReference type="HOGENOM" id="CLU_042020_0_0_6"/>
<dbReference type="BioCyc" id="PAER208963:G1G74-1559-MONOMER"/>
<dbReference type="Proteomes" id="UP000000653">
    <property type="component" value="Chromosome"/>
</dbReference>
<dbReference type="GO" id="GO:0005886">
    <property type="term" value="C:plasma membrane"/>
    <property type="evidence" value="ECO:0007669"/>
    <property type="project" value="UniProtKB-SubCell"/>
</dbReference>
<dbReference type="GO" id="GO:0022900">
    <property type="term" value="P:electron transport chain"/>
    <property type="evidence" value="ECO:0007669"/>
    <property type="project" value="UniProtKB-UniRule"/>
</dbReference>
<dbReference type="GO" id="GO:0055085">
    <property type="term" value="P:transmembrane transport"/>
    <property type="evidence" value="ECO:0007669"/>
    <property type="project" value="InterPro"/>
</dbReference>
<dbReference type="HAMAP" id="MF_00462">
    <property type="entry name" value="RsxD_RnfD"/>
    <property type="match status" value="1"/>
</dbReference>
<dbReference type="InterPro" id="IPR004338">
    <property type="entry name" value="NqrB/RnfD"/>
</dbReference>
<dbReference type="InterPro" id="IPR011303">
    <property type="entry name" value="RnfD_bac"/>
</dbReference>
<dbReference type="NCBIfam" id="TIGR01946">
    <property type="entry name" value="rnfD"/>
    <property type="match status" value="1"/>
</dbReference>
<dbReference type="PANTHER" id="PTHR30578">
    <property type="entry name" value="ELECTRON TRANSPORT COMPLEX PROTEIN RNFD"/>
    <property type="match status" value="1"/>
</dbReference>
<dbReference type="PANTHER" id="PTHR30578:SF0">
    <property type="entry name" value="ION-TRANSLOCATING OXIDOREDUCTASE COMPLEX SUBUNIT D"/>
    <property type="match status" value="1"/>
</dbReference>
<dbReference type="Pfam" id="PF03116">
    <property type="entry name" value="NQR2_RnfD_RnfE"/>
    <property type="match status" value="1"/>
</dbReference>
<protein>
    <recommendedName>
        <fullName evidence="1">Ion-translocating oxidoreductase complex subunit D</fullName>
        <ecNumber evidence="1">7.-.-.-</ecNumber>
    </recommendedName>
    <alternativeName>
        <fullName evidence="1">Rnf electron transport complex subunit D</fullName>
    </alternativeName>
</protein>
<evidence type="ECO:0000255" key="1">
    <source>
        <dbReference type="HAMAP-Rule" id="MF_00462"/>
    </source>
</evidence>
<sequence>MALPRPTSPHARGSNRTPAIMRLVLGACVPGLLTLTWLYGPGTLLNLAWASLVALACEAAMLALRKRPPGVFLKDGSALVTALLLAVALPPYAPWWLTLVATFFALVFGKHLYGGLGQNPFNPAMLGYVVALVSFPLEMTRWPSPDSALGLPDSLREFLGLATRPDAWAHATALDVLKTDRSLTVDELFAGNPAFGHLGSAGSEWVNLAFLLGGLFLLWRRLFTWHAPLGMLAGLFAMSLLFWNGSGSDSHGSPLFHLFSGATMLGAFFIVTDPVSGATSNRGRLVFGLGVGVLTYVIRAWGGYPDGVAFAVLLMNLAAPTIDYYTRPRTYGHRKAERGFKAGD</sequence>
<accession>Q02QY1</accession>
<reference key="1">
    <citation type="journal article" date="2006" name="Genome Biol.">
        <title>Genomic analysis reveals that Pseudomonas aeruginosa virulence is combinatorial.</title>
        <authorList>
            <person name="Lee D.G."/>
            <person name="Urbach J.M."/>
            <person name="Wu G."/>
            <person name="Liberati N.T."/>
            <person name="Feinbaum R.L."/>
            <person name="Miyata S."/>
            <person name="Diggins L.T."/>
            <person name="He J."/>
            <person name="Saucier M."/>
            <person name="Deziel E."/>
            <person name="Friedman L."/>
            <person name="Li L."/>
            <person name="Grills G."/>
            <person name="Montgomery K."/>
            <person name="Kucherlapati R."/>
            <person name="Rahme L.G."/>
            <person name="Ausubel F.M."/>
        </authorList>
    </citation>
    <scope>NUCLEOTIDE SEQUENCE [LARGE SCALE GENOMIC DNA]</scope>
    <source>
        <strain>UCBPP-PA14</strain>
    </source>
</reference>